<name>RPOC_PEDAC</name>
<feature type="chain" id="PRO_0000067773" description="DNA-directed RNA polymerase subunit beta'">
    <location>
        <begin position="1"/>
        <end position="1055" status="greater than"/>
    </location>
</feature>
<feature type="binding site" evidence="1">
    <location>
        <position position="60"/>
    </location>
    <ligand>
        <name>Zn(2+)</name>
        <dbReference type="ChEBI" id="CHEBI:29105"/>
        <label>1</label>
    </ligand>
</feature>
<feature type="binding site" evidence="1">
    <location>
        <position position="62"/>
    </location>
    <ligand>
        <name>Zn(2+)</name>
        <dbReference type="ChEBI" id="CHEBI:29105"/>
        <label>1</label>
    </ligand>
</feature>
<feature type="binding site" evidence="1">
    <location>
        <position position="75"/>
    </location>
    <ligand>
        <name>Zn(2+)</name>
        <dbReference type="ChEBI" id="CHEBI:29105"/>
        <label>1</label>
    </ligand>
</feature>
<feature type="binding site" evidence="1">
    <location>
        <position position="78"/>
    </location>
    <ligand>
        <name>Zn(2+)</name>
        <dbReference type="ChEBI" id="CHEBI:29105"/>
        <label>1</label>
    </ligand>
</feature>
<feature type="binding site" evidence="1">
    <location>
        <position position="449"/>
    </location>
    <ligand>
        <name>Mg(2+)</name>
        <dbReference type="ChEBI" id="CHEBI:18420"/>
    </ligand>
</feature>
<feature type="binding site" evidence="1">
    <location>
        <position position="451"/>
    </location>
    <ligand>
        <name>Mg(2+)</name>
        <dbReference type="ChEBI" id="CHEBI:18420"/>
    </ligand>
</feature>
<feature type="binding site" evidence="1">
    <location>
        <position position="453"/>
    </location>
    <ligand>
        <name>Mg(2+)</name>
        <dbReference type="ChEBI" id="CHEBI:18420"/>
    </ligand>
</feature>
<feature type="binding site" evidence="1">
    <location>
        <position position="818"/>
    </location>
    <ligand>
        <name>Zn(2+)</name>
        <dbReference type="ChEBI" id="CHEBI:29105"/>
        <label>2</label>
    </ligand>
</feature>
<feature type="binding site" evidence="1">
    <location>
        <position position="892"/>
    </location>
    <ligand>
        <name>Zn(2+)</name>
        <dbReference type="ChEBI" id="CHEBI:29105"/>
        <label>2</label>
    </ligand>
</feature>
<feature type="binding site" evidence="1">
    <location>
        <position position="899"/>
    </location>
    <ligand>
        <name>Zn(2+)</name>
        <dbReference type="ChEBI" id="CHEBI:29105"/>
        <label>2</label>
    </ligand>
</feature>
<feature type="binding site" evidence="1">
    <location>
        <position position="902"/>
    </location>
    <ligand>
        <name>Zn(2+)</name>
        <dbReference type="ChEBI" id="CHEBI:29105"/>
        <label>2</label>
    </ligand>
</feature>
<feature type="non-terminal residue">
    <location>
        <position position="1055"/>
    </location>
</feature>
<reference key="1">
    <citation type="submission" date="1996-08" db="EMBL/GenBank/DDBJ databases">
        <title>Cloning part of the rpoC gene encoding the B' subunit of the DNA-dependent RNA polymerase from some Gram-positive bacteria and comparative amino acid sequence.</title>
        <authorList>
            <person name="Morse R."/>
            <person name="Collins M.D."/>
            <person name="Balsdon J.T."/>
            <person name="Reading S."/>
            <person name="Richardson P.T."/>
        </authorList>
    </citation>
    <scope>NUCLEOTIDE SEQUENCE [GENOMIC DNA]</scope>
</reference>
<accession>P77917</accession>
<comment type="function">
    <text evidence="1">DNA-dependent RNA polymerase catalyzes the transcription of DNA into RNA using the four ribonucleoside triphosphates as substrates.</text>
</comment>
<comment type="catalytic activity">
    <reaction evidence="1">
        <text>RNA(n) + a ribonucleoside 5'-triphosphate = RNA(n+1) + diphosphate</text>
        <dbReference type="Rhea" id="RHEA:21248"/>
        <dbReference type="Rhea" id="RHEA-COMP:14527"/>
        <dbReference type="Rhea" id="RHEA-COMP:17342"/>
        <dbReference type="ChEBI" id="CHEBI:33019"/>
        <dbReference type="ChEBI" id="CHEBI:61557"/>
        <dbReference type="ChEBI" id="CHEBI:140395"/>
        <dbReference type="EC" id="2.7.7.6"/>
    </reaction>
</comment>
<comment type="cofactor">
    <cofactor evidence="1">
        <name>Mg(2+)</name>
        <dbReference type="ChEBI" id="CHEBI:18420"/>
    </cofactor>
    <text evidence="1">Binds 1 Mg(2+) ion per subunit.</text>
</comment>
<comment type="cofactor">
    <cofactor evidence="1">
        <name>Zn(2+)</name>
        <dbReference type="ChEBI" id="CHEBI:29105"/>
    </cofactor>
    <text evidence="1">Binds 2 Zn(2+) ions per subunit.</text>
</comment>
<comment type="subunit">
    <text evidence="1">The RNAP catalytic core consists of 2 alpha, 1 beta, 1 beta' and 1 omega subunit. When a sigma factor is associated with the core the holoenzyme is formed, which can initiate transcription.</text>
</comment>
<comment type="similarity">
    <text evidence="1 2">Belongs to the RNA polymerase beta' chain family.</text>
</comment>
<organism>
    <name type="scientific">Pediococcus acidilactici</name>
    <dbReference type="NCBI Taxonomy" id="1254"/>
    <lineage>
        <taxon>Bacteria</taxon>
        <taxon>Bacillati</taxon>
        <taxon>Bacillota</taxon>
        <taxon>Bacilli</taxon>
        <taxon>Lactobacillales</taxon>
        <taxon>Lactobacillaceae</taxon>
        <taxon>Pediococcus</taxon>
        <taxon>Pediococcus acidilactici group</taxon>
    </lineage>
</organism>
<protein>
    <recommendedName>
        <fullName evidence="1">DNA-directed RNA polymerase subunit beta'</fullName>
        <shortName evidence="1">RNAP subunit beta'</shortName>
        <ecNumber evidence="1">2.7.7.6</ecNumber>
    </recommendedName>
    <alternativeName>
        <fullName evidence="1">RNA polymerase subunit beta'</fullName>
    </alternativeName>
    <alternativeName>
        <fullName evidence="1">Transcriptase subunit beta'</fullName>
    </alternativeName>
</protein>
<sequence length="1055" mass="117925">MIDVNKFESMQIGLASPDKIRMWSYGEVKKPETINYRTLKPEKDGLFDERIFGPTKDYECACGKYKRIRYKGIVCDRCGVEVTKSKVRRERMGHIELAAPVTHIWYFKGIPSRMGLVLDMSPRSLEEIIYFASYVVVDPGDTPLEKKQLLTEREYRAKLDEYGNRFVAKIGGEAIQALLQSVDLEKEANLLKEELKEASGQKRTRAVRRLDIIEAFIKSGNHPDWMVMDAIPVMPPDLRPMVQLDGGRFATSDLKHLYRRVINRNNRLKRLLDLNAPGIIVQNEKRMLQEAVDALIDNGRRGRPVAGPGNRPLKSLSHMLKGKQEGFRQNLLGKRVDYSGRSVIDVGPSLKMNQMGLPVPMAMELFKPFIMKELVSRNLASNIKNAKRKIDRKDEEVYDVLEDVIKEHPVLLNRAPTLHRLGIQAFEPVLVSGKAMRLHPLACEAYNADFDGDQMAIHVPLSNEAQAEARLLMLAAHHILAPKDGKPVVTPSQDMVIGNYWLTMERAESVGEGMIFNDLDEVKLALQNGYVSIHTRIGVRASSMPEKPFTDQQRQQILITTAGKMLFNDILPKDFVYLNAPTNEKLVNGTPDEYFLEAGEDIHEQLNQRPLLSPFKSGFLSDVIAEVYKQYKVTETSLLLDRMKDLGFYRSTLSGLTVGIADITNLPDKPAIIAAAHKKVATVTKQFRRGLITDDERYERVIGIWNDAKDEIQQRLMDTFDPQNPIFMMSDSGARGNISNFTQLAGMRGLMAAPNGKIMELPILSNFREGLSVLEMFISTHGARKGMTDTALKTANSGYLTRRLVDVAQDVIVREKDCGTDRGLLITAIAEGNEMIEPLYDRILGRYTMKSVINPETGKVIVGQNEMIDERSAQEIIDAGIQEVTIRSAFTCNTAHGVCEKCYGRNMATGDRVEVGEAVGTVAAQSIGEPGTQLTMRNFHTGGVAGNADITQGLPRIQEIVEARNPKGPAEISEVTGVVESIEEDPAEGTKEVTVKGETDSRTYSLPITARMKVAEGDYIHRGAPLNEGSIDPKKLIKVRDVLSTENYLLSEIQK</sequence>
<keyword id="KW-0240">DNA-directed RNA polymerase</keyword>
<keyword id="KW-0460">Magnesium</keyword>
<keyword id="KW-0479">Metal-binding</keyword>
<keyword id="KW-0548">Nucleotidyltransferase</keyword>
<keyword id="KW-0804">Transcription</keyword>
<keyword id="KW-0808">Transferase</keyword>
<keyword id="KW-0862">Zinc</keyword>
<evidence type="ECO:0000255" key="1">
    <source>
        <dbReference type="HAMAP-Rule" id="MF_01322"/>
    </source>
</evidence>
<evidence type="ECO:0000305" key="2"/>
<proteinExistence type="inferred from homology"/>
<dbReference type="EC" id="2.7.7.6" evidence="1"/>
<dbReference type="EMBL" id="X89232">
    <property type="protein sequence ID" value="CAA61516.1"/>
    <property type="molecule type" value="Genomic_DNA"/>
</dbReference>
<dbReference type="PIR" id="T10432">
    <property type="entry name" value="T10432"/>
</dbReference>
<dbReference type="SMR" id="P77917"/>
<dbReference type="STRING" id="1254.A4V11_04575"/>
<dbReference type="GO" id="GO:0000428">
    <property type="term" value="C:DNA-directed RNA polymerase complex"/>
    <property type="evidence" value="ECO:0007669"/>
    <property type="project" value="UniProtKB-KW"/>
</dbReference>
<dbReference type="GO" id="GO:0003677">
    <property type="term" value="F:DNA binding"/>
    <property type="evidence" value="ECO:0007669"/>
    <property type="project" value="InterPro"/>
</dbReference>
<dbReference type="GO" id="GO:0003899">
    <property type="term" value="F:DNA-directed RNA polymerase activity"/>
    <property type="evidence" value="ECO:0007669"/>
    <property type="project" value="UniProtKB-EC"/>
</dbReference>
<dbReference type="GO" id="GO:0046872">
    <property type="term" value="F:metal ion binding"/>
    <property type="evidence" value="ECO:0007669"/>
    <property type="project" value="UniProtKB-KW"/>
</dbReference>
<dbReference type="GO" id="GO:0006351">
    <property type="term" value="P:DNA-templated transcription"/>
    <property type="evidence" value="ECO:0007669"/>
    <property type="project" value="InterPro"/>
</dbReference>
<dbReference type="CDD" id="cd01609">
    <property type="entry name" value="RNAP_beta'_N"/>
    <property type="match status" value="1"/>
</dbReference>
<dbReference type="FunFam" id="4.10.860.120:FF:000001">
    <property type="entry name" value="DNA-directed RNA polymerase subunit beta"/>
    <property type="match status" value="1"/>
</dbReference>
<dbReference type="Gene3D" id="1.10.132.30">
    <property type="match status" value="1"/>
</dbReference>
<dbReference type="Gene3D" id="1.10.1790.20">
    <property type="match status" value="1"/>
</dbReference>
<dbReference type="Gene3D" id="1.10.40.90">
    <property type="match status" value="1"/>
</dbReference>
<dbReference type="Gene3D" id="2.40.40.20">
    <property type="match status" value="1"/>
</dbReference>
<dbReference type="Gene3D" id="2.40.50.100">
    <property type="match status" value="1"/>
</dbReference>
<dbReference type="Gene3D" id="4.10.860.120">
    <property type="entry name" value="RNA polymerase II, clamp domain"/>
    <property type="match status" value="1"/>
</dbReference>
<dbReference type="Gene3D" id="1.10.274.100">
    <property type="entry name" value="RNA polymerase Rpb1, domain 3"/>
    <property type="match status" value="1"/>
</dbReference>
<dbReference type="HAMAP" id="MF_01322">
    <property type="entry name" value="RNApol_bact_RpoC"/>
    <property type="match status" value="1"/>
</dbReference>
<dbReference type="InterPro" id="IPR045867">
    <property type="entry name" value="DNA-dir_RpoC_beta_prime"/>
</dbReference>
<dbReference type="InterPro" id="IPR012754">
    <property type="entry name" value="DNA-dir_RpoC_beta_prime_bact"/>
</dbReference>
<dbReference type="InterPro" id="IPR000722">
    <property type="entry name" value="RNA_pol_asu"/>
</dbReference>
<dbReference type="InterPro" id="IPR006592">
    <property type="entry name" value="RNA_pol_N"/>
</dbReference>
<dbReference type="InterPro" id="IPR007080">
    <property type="entry name" value="RNA_pol_Rpb1_1"/>
</dbReference>
<dbReference type="InterPro" id="IPR007066">
    <property type="entry name" value="RNA_pol_Rpb1_3"/>
</dbReference>
<dbReference type="InterPro" id="IPR042102">
    <property type="entry name" value="RNA_pol_Rpb1_3_sf"/>
</dbReference>
<dbReference type="InterPro" id="IPR007083">
    <property type="entry name" value="RNA_pol_Rpb1_4"/>
</dbReference>
<dbReference type="InterPro" id="IPR007081">
    <property type="entry name" value="RNA_pol_Rpb1_5"/>
</dbReference>
<dbReference type="InterPro" id="IPR044893">
    <property type="entry name" value="RNA_pol_Rpb1_clamp_domain"/>
</dbReference>
<dbReference type="InterPro" id="IPR038120">
    <property type="entry name" value="Rpb1_funnel_sf"/>
</dbReference>
<dbReference type="NCBIfam" id="TIGR02386">
    <property type="entry name" value="rpoC_TIGR"/>
    <property type="match status" value="1"/>
</dbReference>
<dbReference type="PANTHER" id="PTHR19376">
    <property type="entry name" value="DNA-DIRECTED RNA POLYMERASE"/>
    <property type="match status" value="1"/>
</dbReference>
<dbReference type="PANTHER" id="PTHR19376:SF54">
    <property type="entry name" value="DNA-DIRECTED RNA POLYMERASE SUBUNIT BETA"/>
    <property type="match status" value="1"/>
</dbReference>
<dbReference type="Pfam" id="PF04997">
    <property type="entry name" value="RNA_pol_Rpb1_1"/>
    <property type="match status" value="1"/>
</dbReference>
<dbReference type="Pfam" id="PF00623">
    <property type="entry name" value="RNA_pol_Rpb1_2"/>
    <property type="match status" value="2"/>
</dbReference>
<dbReference type="Pfam" id="PF04983">
    <property type="entry name" value="RNA_pol_Rpb1_3"/>
    <property type="match status" value="1"/>
</dbReference>
<dbReference type="Pfam" id="PF05000">
    <property type="entry name" value="RNA_pol_Rpb1_4"/>
    <property type="match status" value="1"/>
</dbReference>
<dbReference type="Pfam" id="PF04998">
    <property type="entry name" value="RNA_pol_Rpb1_5"/>
    <property type="match status" value="1"/>
</dbReference>
<dbReference type="SMART" id="SM00663">
    <property type="entry name" value="RPOLA_N"/>
    <property type="match status" value="1"/>
</dbReference>
<dbReference type="SUPFAM" id="SSF64484">
    <property type="entry name" value="beta and beta-prime subunits of DNA dependent RNA-polymerase"/>
    <property type="match status" value="1"/>
</dbReference>
<gene>
    <name evidence="1" type="primary">rpoC</name>
</gene>